<reference key="1">
    <citation type="journal article" date="1993" name="Biochem. Biophys. Res. Commun.">
        <title>Isolation of cDNA clones and tissue expression of rat ral A and ral B GTP-binding proteins.</title>
        <authorList>
            <person name="Wildey G.M."/>
            <person name="Viggeswarapu M."/>
            <person name="Rim S."/>
            <person name="Denker J.K."/>
        </authorList>
    </citation>
    <scope>NUCLEOTIDE SEQUENCE [MRNA]</scope>
</reference>
<reference key="2">
    <citation type="journal article" date="2004" name="Genome Res.">
        <title>The status, quality, and expansion of the NIH full-length cDNA project: the Mammalian Gene Collection (MGC).</title>
        <authorList>
            <consortium name="The MGC Project Team"/>
        </authorList>
    </citation>
    <scope>NUCLEOTIDE SEQUENCE [LARGE SCALE MRNA]</scope>
    <source>
        <tissue>Lung</tissue>
    </source>
</reference>
<reference key="3">
    <citation type="journal article" date="2006" name="Mol. Cell. Biol.">
        <title>RalB mobilizes the exocyst to drive cell migration.</title>
        <authorList>
            <person name="Rosse C."/>
            <person name="Hatzoglou A."/>
            <person name="Parrini M.C."/>
            <person name="White M.A."/>
            <person name="Chavrier P."/>
            <person name="Camonis J."/>
        </authorList>
    </citation>
    <scope>FUNCTION</scope>
</reference>
<reference key="4">
    <citation type="journal article" date="2007" name="J. Neurosci.">
        <title>RalA and RalB function as the critical GTP sensors for GTP-dependent exocytosis.</title>
        <authorList>
            <person name="Li G."/>
            <person name="Han L."/>
            <person name="Chou T.C."/>
            <person name="Fujita Y."/>
            <person name="Arunachalam L."/>
            <person name="Xu A."/>
            <person name="Wong A."/>
            <person name="Chiew S.K."/>
            <person name="Wan Q."/>
            <person name="Wang L."/>
            <person name="Sugita S."/>
        </authorList>
    </citation>
    <scope>FUNCTION</scope>
</reference>
<name>RALB_RAT</name>
<comment type="function">
    <text evidence="2 4 5">Multifunctional GTPase involved in a variety of cellular processes including gene expression, cell migration, cell proliferation, oncogenic transformation and membrane trafficking. Accomplishes its multiple functions by interacting with distinct downstream effectors. Acts as a GTP sensor for GTP-dependent exocytosis of dense core vesicles (PubMed:17202486). Required both to stabilize the assembly of the exocyst complex and to localize functional exocyst complexes to the leading edge of migrating cells (PubMed:16382162). Required for suppression of apoptosis (By similarity). In late stages of cytokinesis, upon completion of the bridge formation between dividing cells, mediates exocyst recruitment to the midbody to drive abscission (By similarity). Involved in ligand-dependent receptor mediated endocytosis of the EGF and insulin receptors (By similarity).</text>
</comment>
<comment type="catalytic activity">
    <reaction evidence="6">
        <text>GTP + H2O = GDP + phosphate + H(+)</text>
        <dbReference type="Rhea" id="RHEA:19669"/>
        <dbReference type="ChEBI" id="CHEBI:15377"/>
        <dbReference type="ChEBI" id="CHEBI:15378"/>
        <dbReference type="ChEBI" id="CHEBI:37565"/>
        <dbReference type="ChEBI" id="CHEBI:43474"/>
        <dbReference type="ChEBI" id="CHEBI:58189"/>
        <dbReference type="EC" id="3.6.5.2"/>
    </reaction>
</comment>
<comment type="activity regulation">
    <text>Alternates between an inactive form bound to GDP and an active form bound to GTP. Activated by a guanine nucleotide-exchange factor (GEF) and inactivated by a GTPase-activating protein (GAP).</text>
</comment>
<comment type="subunit">
    <text evidence="2">Interacts with EXOC2/Sec5 and EXOC8/Exo84. Interacts (via effector domain) with RALBP1.</text>
</comment>
<comment type="subcellular location">
    <subcellularLocation>
        <location evidence="2">Cell membrane</location>
        <topology evidence="2">Lipid-anchor</topology>
        <orientation evidence="2">Cytoplasmic side</orientation>
    </subcellularLocation>
    <subcellularLocation>
        <location evidence="2">Midbody</location>
    </subcellularLocation>
    <text evidence="2">During late cytokinesis, enriched at the midbody.</text>
</comment>
<comment type="PTM">
    <text evidence="2">Prenylation is essential for membrane localization.</text>
</comment>
<comment type="PTM">
    <text evidence="2">The farnesylated form confers resistance to the proapoptotic and anti-anchorage-dependent growth effects of some geranylgeranyltransferase I inhibitors.</text>
</comment>
<comment type="similarity">
    <text evidence="6">Belongs to the small GTPase superfamily. Ras family.</text>
</comment>
<dbReference type="EC" id="3.6.5.2" evidence="6"/>
<dbReference type="EMBL" id="L19699">
    <property type="protein sequence ID" value="AAA42004.1"/>
    <property type="molecule type" value="mRNA"/>
</dbReference>
<dbReference type="EMBL" id="BC072505">
    <property type="protein sequence ID" value="AAH72505.1"/>
    <property type="molecule type" value="mRNA"/>
</dbReference>
<dbReference type="PIR" id="JN0623">
    <property type="entry name" value="JN0623"/>
</dbReference>
<dbReference type="RefSeq" id="NP_446273.1">
    <property type="nucleotide sequence ID" value="NM_053821.2"/>
</dbReference>
<dbReference type="RefSeq" id="XP_017454125.1">
    <property type="nucleotide sequence ID" value="XM_017598636.1"/>
</dbReference>
<dbReference type="RefSeq" id="XP_038946195.1">
    <property type="nucleotide sequence ID" value="XM_039090267.2"/>
</dbReference>
<dbReference type="SMR" id="P36860"/>
<dbReference type="BioGRID" id="250481">
    <property type="interactions" value="1"/>
</dbReference>
<dbReference type="FunCoup" id="P36860">
    <property type="interactions" value="2840"/>
</dbReference>
<dbReference type="IntAct" id="P36860">
    <property type="interactions" value="4"/>
</dbReference>
<dbReference type="STRING" id="10116.ENSRNOP00000003413"/>
<dbReference type="iPTMnet" id="P36860"/>
<dbReference type="PhosphoSitePlus" id="P36860"/>
<dbReference type="SwissPalm" id="P36860"/>
<dbReference type="jPOST" id="P36860"/>
<dbReference type="PaxDb" id="10116-ENSRNOP00000003413"/>
<dbReference type="Ensembl" id="ENSRNOT00000096405.1">
    <property type="protein sequence ID" value="ENSRNOP00000087562.1"/>
    <property type="gene ID" value="ENSRNOG00000002440.7"/>
</dbReference>
<dbReference type="GeneID" id="116546"/>
<dbReference type="KEGG" id="rno:116546"/>
<dbReference type="AGR" id="RGD:619852"/>
<dbReference type="CTD" id="5899"/>
<dbReference type="RGD" id="619852">
    <property type="gene designation" value="Ralb"/>
</dbReference>
<dbReference type="eggNOG" id="KOG0395">
    <property type="taxonomic scope" value="Eukaryota"/>
</dbReference>
<dbReference type="GeneTree" id="ENSGT00940000155984"/>
<dbReference type="InParanoid" id="P36860"/>
<dbReference type="OMA" id="DDTIPFI"/>
<dbReference type="OrthoDB" id="35451at9989"/>
<dbReference type="PhylomeDB" id="P36860"/>
<dbReference type="PRO" id="PR:P36860"/>
<dbReference type="Proteomes" id="UP000002494">
    <property type="component" value="Chromosome 13"/>
</dbReference>
<dbReference type="GO" id="GO:0005829">
    <property type="term" value="C:cytosol"/>
    <property type="evidence" value="ECO:0000304"/>
    <property type="project" value="Reactome"/>
</dbReference>
<dbReference type="GO" id="GO:0030496">
    <property type="term" value="C:midbody"/>
    <property type="evidence" value="ECO:0000250"/>
    <property type="project" value="UniProtKB"/>
</dbReference>
<dbReference type="GO" id="GO:0005886">
    <property type="term" value="C:plasma membrane"/>
    <property type="evidence" value="ECO:0000250"/>
    <property type="project" value="UniProtKB"/>
</dbReference>
<dbReference type="GO" id="GO:0051117">
    <property type="term" value="F:ATPase binding"/>
    <property type="evidence" value="ECO:0000266"/>
    <property type="project" value="RGD"/>
</dbReference>
<dbReference type="GO" id="GO:0003925">
    <property type="term" value="F:G protein activity"/>
    <property type="evidence" value="ECO:0007669"/>
    <property type="project" value="UniProtKB-EC"/>
</dbReference>
<dbReference type="GO" id="GO:0019003">
    <property type="term" value="F:GDP binding"/>
    <property type="evidence" value="ECO:0000266"/>
    <property type="project" value="RGD"/>
</dbReference>
<dbReference type="GO" id="GO:0005525">
    <property type="term" value="F:GTP binding"/>
    <property type="evidence" value="ECO:0000250"/>
    <property type="project" value="UniProtKB"/>
</dbReference>
<dbReference type="GO" id="GO:0003924">
    <property type="term" value="F:GTPase activity"/>
    <property type="evidence" value="ECO:0000250"/>
    <property type="project" value="UniProtKB"/>
</dbReference>
<dbReference type="GO" id="GO:0031625">
    <property type="term" value="F:ubiquitin protein ligase binding"/>
    <property type="evidence" value="ECO:0000266"/>
    <property type="project" value="RGD"/>
</dbReference>
<dbReference type="GO" id="GO:0006915">
    <property type="term" value="P:apoptotic process"/>
    <property type="evidence" value="ECO:0007669"/>
    <property type="project" value="UniProtKB-KW"/>
</dbReference>
<dbReference type="GO" id="GO:0051301">
    <property type="term" value="P:cell division"/>
    <property type="evidence" value="ECO:0007669"/>
    <property type="project" value="UniProtKB-KW"/>
</dbReference>
<dbReference type="GO" id="GO:0071360">
    <property type="term" value="P:cellular response to exogenous dsRNA"/>
    <property type="evidence" value="ECO:0000266"/>
    <property type="project" value="RGD"/>
</dbReference>
<dbReference type="GO" id="GO:0009267">
    <property type="term" value="P:cellular response to starvation"/>
    <property type="evidence" value="ECO:0000266"/>
    <property type="project" value="RGD"/>
</dbReference>
<dbReference type="GO" id="GO:2000786">
    <property type="term" value="P:positive regulation of autophagosome assembly"/>
    <property type="evidence" value="ECO:0000266"/>
    <property type="project" value="RGD"/>
</dbReference>
<dbReference type="GO" id="GO:0045742">
    <property type="term" value="P:positive regulation of epidermal growth factor receptor signaling pathway"/>
    <property type="evidence" value="ECO:0000266"/>
    <property type="project" value="RGD"/>
</dbReference>
<dbReference type="GO" id="GO:0007265">
    <property type="term" value="P:Ras protein signal transduction"/>
    <property type="evidence" value="ECO:0000318"/>
    <property type="project" value="GO_Central"/>
</dbReference>
<dbReference type="GO" id="GO:0031623">
    <property type="term" value="P:receptor internalization"/>
    <property type="evidence" value="ECO:0000266"/>
    <property type="project" value="RGD"/>
</dbReference>
<dbReference type="GO" id="GO:0001928">
    <property type="term" value="P:regulation of exocyst assembly"/>
    <property type="evidence" value="ECO:0000314"/>
    <property type="project" value="UniProtKB"/>
</dbReference>
<dbReference type="GO" id="GO:0060178">
    <property type="term" value="P:regulation of exocyst localization"/>
    <property type="evidence" value="ECO:0000314"/>
    <property type="project" value="UniProtKB"/>
</dbReference>
<dbReference type="CDD" id="cd04139">
    <property type="entry name" value="RalA_RalB"/>
    <property type="match status" value="1"/>
</dbReference>
<dbReference type="FunFam" id="3.40.50.300:FF:000203">
    <property type="entry name" value="Putative ras-related protein ral-a"/>
    <property type="match status" value="1"/>
</dbReference>
<dbReference type="Gene3D" id="3.40.50.300">
    <property type="entry name" value="P-loop containing nucleotide triphosphate hydrolases"/>
    <property type="match status" value="1"/>
</dbReference>
<dbReference type="InterPro" id="IPR027417">
    <property type="entry name" value="P-loop_NTPase"/>
</dbReference>
<dbReference type="InterPro" id="IPR005225">
    <property type="entry name" value="Small_GTP-bd"/>
</dbReference>
<dbReference type="InterPro" id="IPR001806">
    <property type="entry name" value="Small_GTPase"/>
</dbReference>
<dbReference type="InterPro" id="IPR020849">
    <property type="entry name" value="Small_GTPase_Ras-type"/>
</dbReference>
<dbReference type="NCBIfam" id="TIGR00231">
    <property type="entry name" value="small_GTP"/>
    <property type="match status" value="1"/>
</dbReference>
<dbReference type="PANTHER" id="PTHR24070">
    <property type="entry name" value="RAS, DI-RAS, AND RHEB FAMILY MEMBERS OF SMALL GTPASE SUPERFAMILY"/>
    <property type="match status" value="1"/>
</dbReference>
<dbReference type="Pfam" id="PF00071">
    <property type="entry name" value="Ras"/>
    <property type="match status" value="1"/>
</dbReference>
<dbReference type="PRINTS" id="PR00449">
    <property type="entry name" value="RASTRNSFRMNG"/>
</dbReference>
<dbReference type="SMART" id="SM00175">
    <property type="entry name" value="RAB"/>
    <property type="match status" value="1"/>
</dbReference>
<dbReference type="SMART" id="SM00176">
    <property type="entry name" value="RAN"/>
    <property type="match status" value="1"/>
</dbReference>
<dbReference type="SMART" id="SM00173">
    <property type="entry name" value="RAS"/>
    <property type="match status" value="1"/>
</dbReference>
<dbReference type="SMART" id="SM00174">
    <property type="entry name" value="RHO"/>
    <property type="match status" value="1"/>
</dbReference>
<dbReference type="SUPFAM" id="SSF52540">
    <property type="entry name" value="P-loop containing nucleoside triphosphate hydrolases"/>
    <property type="match status" value="1"/>
</dbReference>
<dbReference type="PROSITE" id="PS51421">
    <property type="entry name" value="RAS"/>
    <property type="match status" value="1"/>
</dbReference>
<proteinExistence type="evidence at transcript level"/>
<evidence type="ECO:0000250" key="1"/>
<evidence type="ECO:0000250" key="2">
    <source>
        <dbReference type="UniProtKB" id="P11234"/>
    </source>
</evidence>
<evidence type="ECO:0000256" key="3">
    <source>
        <dbReference type="SAM" id="MobiDB-lite"/>
    </source>
</evidence>
<evidence type="ECO:0000269" key="4">
    <source>
    </source>
</evidence>
<evidence type="ECO:0000269" key="5">
    <source>
    </source>
</evidence>
<evidence type="ECO:0000305" key="6"/>
<accession>P36860</accession>
<feature type="chain" id="PRO_0000082700" description="Ras-related protein Ral-B">
    <location>
        <begin position="1"/>
        <end position="203"/>
    </location>
</feature>
<feature type="propeptide" id="PRO_0000281353" description="Removed in mature form" evidence="1">
    <location>
        <begin position="204"/>
        <end position="206"/>
    </location>
</feature>
<feature type="region of interest" description="Disordered" evidence="3">
    <location>
        <begin position="181"/>
        <end position="206"/>
    </location>
</feature>
<feature type="short sequence motif" description="Effector region">
    <location>
        <begin position="43"/>
        <end position="51"/>
    </location>
</feature>
<feature type="binding site" evidence="1">
    <location>
        <begin position="21"/>
        <end position="29"/>
    </location>
    <ligand>
        <name>GTP</name>
        <dbReference type="ChEBI" id="CHEBI:37565"/>
    </ligand>
</feature>
<feature type="binding site" evidence="1">
    <location>
        <begin position="68"/>
        <end position="72"/>
    </location>
    <ligand>
        <name>GTP</name>
        <dbReference type="ChEBI" id="CHEBI:37565"/>
    </ligand>
</feature>
<feature type="binding site" evidence="1">
    <location>
        <begin position="128"/>
        <end position="131"/>
    </location>
    <ligand>
        <name>GTP</name>
        <dbReference type="ChEBI" id="CHEBI:37565"/>
    </ligand>
</feature>
<feature type="binding site" evidence="1">
    <location>
        <begin position="158"/>
        <end position="160"/>
    </location>
    <ligand>
        <name>GTP</name>
        <dbReference type="ChEBI" id="CHEBI:37565"/>
    </ligand>
</feature>
<feature type="modified residue" description="Cysteine methyl ester" evidence="1">
    <location>
        <position position="203"/>
    </location>
</feature>
<feature type="lipid moiety-binding region" description="S-geranylgeranyl cysteine" evidence="1">
    <location>
        <position position="203"/>
    </location>
</feature>
<keyword id="KW-0053">Apoptosis</keyword>
<keyword id="KW-0131">Cell cycle</keyword>
<keyword id="KW-0132">Cell division</keyword>
<keyword id="KW-1003">Cell membrane</keyword>
<keyword id="KW-0342">GTP-binding</keyword>
<keyword id="KW-0378">Hydrolase</keyword>
<keyword id="KW-0449">Lipoprotein</keyword>
<keyword id="KW-0472">Membrane</keyword>
<keyword id="KW-0488">Methylation</keyword>
<keyword id="KW-0547">Nucleotide-binding</keyword>
<keyword id="KW-0636">Prenylation</keyword>
<keyword id="KW-1185">Reference proteome</keyword>
<sequence length="206" mass="23317">MAANKGKSQGSLVLHKVIMVGSGGVGKSALTLQFMYDEFVEDYEPTKADSYRKKVVLDGEEVQIDILDTAGQEDYAAIRDNYFRSGEGFLLVFSITEHESFTATAEFREQILRVKAEEDKIPLLVVGNKSDLEERRQVPVEEARGKAEEWGVQYVETSAKTRANVDKVFFDLMREIRAKKMSENKDKNGRKSGKSKKSFKERCCLL</sequence>
<organism>
    <name type="scientific">Rattus norvegicus</name>
    <name type="common">Rat</name>
    <dbReference type="NCBI Taxonomy" id="10116"/>
    <lineage>
        <taxon>Eukaryota</taxon>
        <taxon>Metazoa</taxon>
        <taxon>Chordata</taxon>
        <taxon>Craniata</taxon>
        <taxon>Vertebrata</taxon>
        <taxon>Euteleostomi</taxon>
        <taxon>Mammalia</taxon>
        <taxon>Eutheria</taxon>
        <taxon>Euarchontoglires</taxon>
        <taxon>Glires</taxon>
        <taxon>Rodentia</taxon>
        <taxon>Myomorpha</taxon>
        <taxon>Muroidea</taxon>
        <taxon>Muridae</taxon>
        <taxon>Murinae</taxon>
        <taxon>Rattus</taxon>
    </lineage>
</organism>
<gene>
    <name type="primary">Ralb</name>
    <name type="synonym">Ral-b</name>
</gene>
<protein>
    <recommendedName>
        <fullName>Ras-related protein Ral-B</fullName>
        <ecNumber evidence="6">3.6.5.2</ecNumber>
    </recommendedName>
</protein>